<reference key="1">
    <citation type="journal article" date="2000" name="Science">
        <title>The genome sequence of Drosophila melanogaster.</title>
        <authorList>
            <person name="Adams M.D."/>
            <person name="Celniker S.E."/>
            <person name="Holt R.A."/>
            <person name="Evans C.A."/>
            <person name="Gocayne J.D."/>
            <person name="Amanatides P.G."/>
            <person name="Scherer S.E."/>
            <person name="Li P.W."/>
            <person name="Hoskins R.A."/>
            <person name="Galle R.F."/>
            <person name="George R.A."/>
            <person name="Lewis S.E."/>
            <person name="Richards S."/>
            <person name="Ashburner M."/>
            <person name="Henderson S.N."/>
            <person name="Sutton G.G."/>
            <person name="Wortman J.R."/>
            <person name="Yandell M.D."/>
            <person name="Zhang Q."/>
            <person name="Chen L.X."/>
            <person name="Brandon R.C."/>
            <person name="Rogers Y.-H.C."/>
            <person name="Blazej R.G."/>
            <person name="Champe M."/>
            <person name="Pfeiffer B.D."/>
            <person name="Wan K.H."/>
            <person name="Doyle C."/>
            <person name="Baxter E.G."/>
            <person name="Helt G."/>
            <person name="Nelson C.R."/>
            <person name="Miklos G.L.G."/>
            <person name="Abril J.F."/>
            <person name="Agbayani A."/>
            <person name="An H.-J."/>
            <person name="Andrews-Pfannkoch C."/>
            <person name="Baldwin D."/>
            <person name="Ballew R.M."/>
            <person name="Basu A."/>
            <person name="Baxendale J."/>
            <person name="Bayraktaroglu L."/>
            <person name="Beasley E.M."/>
            <person name="Beeson K.Y."/>
            <person name="Benos P.V."/>
            <person name="Berman B.P."/>
            <person name="Bhandari D."/>
            <person name="Bolshakov S."/>
            <person name="Borkova D."/>
            <person name="Botchan M.R."/>
            <person name="Bouck J."/>
            <person name="Brokstein P."/>
            <person name="Brottier P."/>
            <person name="Burtis K.C."/>
            <person name="Busam D.A."/>
            <person name="Butler H."/>
            <person name="Cadieu E."/>
            <person name="Center A."/>
            <person name="Chandra I."/>
            <person name="Cherry J.M."/>
            <person name="Cawley S."/>
            <person name="Dahlke C."/>
            <person name="Davenport L.B."/>
            <person name="Davies P."/>
            <person name="de Pablos B."/>
            <person name="Delcher A."/>
            <person name="Deng Z."/>
            <person name="Mays A.D."/>
            <person name="Dew I."/>
            <person name="Dietz S.M."/>
            <person name="Dodson K."/>
            <person name="Doup L.E."/>
            <person name="Downes M."/>
            <person name="Dugan-Rocha S."/>
            <person name="Dunkov B.C."/>
            <person name="Dunn P."/>
            <person name="Durbin K.J."/>
            <person name="Evangelista C.C."/>
            <person name="Ferraz C."/>
            <person name="Ferriera S."/>
            <person name="Fleischmann W."/>
            <person name="Fosler C."/>
            <person name="Gabrielian A.E."/>
            <person name="Garg N.S."/>
            <person name="Gelbart W.M."/>
            <person name="Glasser K."/>
            <person name="Glodek A."/>
            <person name="Gong F."/>
            <person name="Gorrell J.H."/>
            <person name="Gu Z."/>
            <person name="Guan P."/>
            <person name="Harris M."/>
            <person name="Harris N.L."/>
            <person name="Harvey D.A."/>
            <person name="Heiman T.J."/>
            <person name="Hernandez J.R."/>
            <person name="Houck J."/>
            <person name="Hostin D."/>
            <person name="Houston K.A."/>
            <person name="Howland T.J."/>
            <person name="Wei M.-H."/>
            <person name="Ibegwam C."/>
            <person name="Jalali M."/>
            <person name="Kalush F."/>
            <person name="Karpen G.H."/>
            <person name="Ke Z."/>
            <person name="Kennison J.A."/>
            <person name="Ketchum K.A."/>
            <person name="Kimmel B.E."/>
            <person name="Kodira C.D."/>
            <person name="Kraft C.L."/>
            <person name="Kravitz S."/>
            <person name="Kulp D."/>
            <person name="Lai Z."/>
            <person name="Lasko P."/>
            <person name="Lei Y."/>
            <person name="Levitsky A.A."/>
            <person name="Li J.H."/>
            <person name="Li Z."/>
            <person name="Liang Y."/>
            <person name="Lin X."/>
            <person name="Liu X."/>
            <person name="Mattei B."/>
            <person name="McIntosh T.C."/>
            <person name="McLeod M.P."/>
            <person name="McPherson D."/>
            <person name="Merkulov G."/>
            <person name="Milshina N.V."/>
            <person name="Mobarry C."/>
            <person name="Morris J."/>
            <person name="Moshrefi A."/>
            <person name="Mount S.M."/>
            <person name="Moy M."/>
            <person name="Murphy B."/>
            <person name="Murphy L."/>
            <person name="Muzny D.M."/>
            <person name="Nelson D.L."/>
            <person name="Nelson D.R."/>
            <person name="Nelson K.A."/>
            <person name="Nixon K."/>
            <person name="Nusskern D.R."/>
            <person name="Pacleb J.M."/>
            <person name="Palazzolo M."/>
            <person name="Pittman G.S."/>
            <person name="Pan S."/>
            <person name="Pollard J."/>
            <person name="Puri V."/>
            <person name="Reese M.G."/>
            <person name="Reinert K."/>
            <person name="Remington K."/>
            <person name="Saunders R.D.C."/>
            <person name="Scheeler F."/>
            <person name="Shen H."/>
            <person name="Shue B.C."/>
            <person name="Siden-Kiamos I."/>
            <person name="Simpson M."/>
            <person name="Skupski M.P."/>
            <person name="Smith T.J."/>
            <person name="Spier E."/>
            <person name="Spradling A.C."/>
            <person name="Stapleton M."/>
            <person name="Strong R."/>
            <person name="Sun E."/>
            <person name="Svirskas R."/>
            <person name="Tector C."/>
            <person name="Turner R."/>
            <person name="Venter E."/>
            <person name="Wang A.H."/>
            <person name="Wang X."/>
            <person name="Wang Z.-Y."/>
            <person name="Wassarman D.A."/>
            <person name="Weinstock G.M."/>
            <person name="Weissenbach J."/>
            <person name="Williams S.M."/>
            <person name="Woodage T."/>
            <person name="Worley K.C."/>
            <person name="Wu D."/>
            <person name="Yang S."/>
            <person name="Yao Q.A."/>
            <person name="Ye J."/>
            <person name="Yeh R.-F."/>
            <person name="Zaveri J.S."/>
            <person name="Zhan M."/>
            <person name="Zhang G."/>
            <person name="Zhao Q."/>
            <person name="Zheng L."/>
            <person name="Zheng X.H."/>
            <person name="Zhong F.N."/>
            <person name="Zhong W."/>
            <person name="Zhou X."/>
            <person name="Zhu S.C."/>
            <person name="Zhu X."/>
            <person name="Smith H.O."/>
            <person name="Gibbs R.A."/>
            <person name="Myers E.W."/>
            <person name="Rubin G.M."/>
            <person name="Venter J.C."/>
        </authorList>
    </citation>
    <scope>NUCLEOTIDE SEQUENCE [LARGE SCALE GENOMIC DNA]</scope>
    <source>
        <strain>Berkeley</strain>
    </source>
</reference>
<reference key="2">
    <citation type="journal article" date="2002" name="Genome Biol.">
        <title>Annotation of the Drosophila melanogaster euchromatic genome: a systematic review.</title>
        <authorList>
            <person name="Misra S."/>
            <person name="Crosby M.A."/>
            <person name="Mungall C.J."/>
            <person name="Matthews B.B."/>
            <person name="Campbell K.S."/>
            <person name="Hradecky P."/>
            <person name="Huang Y."/>
            <person name="Kaminker J.S."/>
            <person name="Millburn G.H."/>
            <person name="Prochnik S.E."/>
            <person name="Smith C.D."/>
            <person name="Tupy J.L."/>
            <person name="Whitfield E.J."/>
            <person name="Bayraktaroglu L."/>
            <person name="Berman B.P."/>
            <person name="Bettencourt B.R."/>
            <person name="Celniker S.E."/>
            <person name="de Grey A.D.N.J."/>
            <person name="Drysdale R.A."/>
            <person name="Harris N.L."/>
            <person name="Richter J."/>
            <person name="Russo S."/>
            <person name="Schroeder A.J."/>
            <person name="Shu S.Q."/>
            <person name="Stapleton M."/>
            <person name="Yamada C."/>
            <person name="Ashburner M."/>
            <person name="Gelbart W.M."/>
            <person name="Rubin G.M."/>
            <person name="Lewis S.E."/>
        </authorList>
    </citation>
    <scope>GENOME REANNOTATION</scope>
    <source>
        <strain>Berkeley</strain>
    </source>
</reference>
<reference key="3">
    <citation type="journal article" date="2002" name="Genome Biol.">
        <title>A Drosophila full-length cDNA resource.</title>
        <authorList>
            <person name="Stapleton M."/>
            <person name="Carlson J.W."/>
            <person name="Brokstein P."/>
            <person name="Yu C."/>
            <person name="Champe M."/>
            <person name="George R.A."/>
            <person name="Guarin H."/>
            <person name="Kronmiller B."/>
            <person name="Pacleb J.M."/>
            <person name="Park S."/>
            <person name="Wan K.H."/>
            <person name="Rubin G.M."/>
            <person name="Celniker S.E."/>
        </authorList>
    </citation>
    <scope>NUCLEOTIDE SEQUENCE [LARGE SCALE MRNA]</scope>
    <source>
        <strain>Berkeley</strain>
        <tissue>Embryo</tissue>
        <tissue>Head</tissue>
    </source>
</reference>
<reference key="4">
    <citation type="submission" date="2009-10" db="EMBL/GenBank/DDBJ databases">
        <authorList>
            <person name="Carlson J.W."/>
            <person name="Booth B."/>
            <person name="Frise E."/>
            <person name="Park S."/>
            <person name="Wan K.H."/>
            <person name="Yu C."/>
            <person name="Celniker S.E."/>
        </authorList>
    </citation>
    <scope>NUCLEOTIDE SEQUENCE [LARGE SCALE MRNA]</scope>
    <source>
        <strain>Berkeley</strain>
        <tissue>Embryo</tissue>
    </source>
</reference>
<reference key="5">
    <citation type="journal article" date="2005" name="Genetics">
        <title>A genetic screen for dominant modifiers of a small-wing phenotype in Drosophila melanogaster identifies proteins involved in splicing and translation.</title>
        <authorList>
            <person name="Coelho C.M."/>
            <person name="Kolevski B."/>
            <person name="Walker C.D."/>
            <person name="Lavagi I."/>
            <person name="Shaw T."/>
            <person name="Ebert A."/>
            <person name="Leevers S.J."/>
            <person name="Marygold S.J."/>
        </authorList>
    </citation>
    <scope>IDENTIFICATION</scope>
</reference>
<reference key="6">
    <citation type="journal article" date="2007" name="Mol. Biosyst.">
        <title>An integrated chemical, mass spectrometric and computational strategy for (quantitative) phosphoproteomics: application to Drosophila melanogaster Kc167 cells.</title>
        <authorList>
            <person name="Bodenmiller B."/>
            <person name="Mueller L.N."/>
            <person name="Pedrioli P.G.A."/>
            <person name="Pflieger D."/>
            <person name="Juenger M.A."/>
            <person name="Eng J.K."/>
            <person name="Aebersold R."/>
            <person name="Tao W.A."/>
        </authorList>
    </citation>
    <scope>PHOSPHORYLATION [LARGE SCALE ANALYSIS] AT SER-1121</scope>
    <scope>IDENTIFICATION BY MASS SPECTROMETRY</scope>
</reference>
<reference key="7">
    <citation type="journal article" date="2008" name="J. Proteome Res.">
        <title>Phosphoproteome analysis of Drosophila melanogaster embryos.</title>
        <authorList>
            <person name="Zhai B."/>
            <person name="Villen J."/>
            <person name="Beausoleil S.A."/>
            <person name="Mintseris J."/>
            <person name="Gygi S.P."/>
        </authorList>
    </citation>
    <scope>PHOSPHORYLATION [LARGE SCALE ANALYSIS] AT THR-191; THR-201; SER-219; SER-221; THR-1108; SER-1111; SER-1180; SER-1181 AND TYR-1182</scope>
    <scope>IDENTIFICATION BY MASS SPECTROMETRY</scope>
    <source>
        <tissue>Embryo</tissue>
    </source>
</reference>
<reference key="8">
    <citation type="journal article" date="2012" name="Nat. Struct. Mol. Biol.">
        <title>Human CWC22 escorts the helicase eIF4AIII to spliceosomes and promotes exon junction complex assembly.</title>
        <authorList>
            <person name="Barbosa I."/>
            <person name="Haque N."/>
            <person name="Fiorini F."/>
            <person name="Barrandon C."/>
            <person name="Tomasetto C."/>
            <person name="Blanchette M."/>
            <person name="Le Hir H."/>
        </authorList>
    </citation>
    <scope>INTERACTION WITH EIF4AIII</scope>
</reference>
<feature type="chain" id="PRO_0000302011" description="Pre-mRNA-splicing factor CWC22 homolog">
    <location>
        <begin position="1"/>
        <end position="1330"/>
    </location>
</feature>
<feature type="domain" description="MIF4G" evidence="2">
    <location>
        <begin position="420"/>
        <end position="603"/>
    </location>
</feature>
<feature type="domain" description="MI" evidence="2">
    <location>
        <begin position="710"/>
        <end position="826"/>
    </location>
</feature>
<feature type="region of interest" description="Disordered" evidence="3">
    <location>
        <begin position="1"/>
        <end position="377"/>
    </location>
</feature>
<feature type="region of interest" description="Disordered" evidence="3">
    <location>
        <begin position="660"/>
        <end position="697"/>
    </location>
</feature>
<feature type="region of interest" description="Disordered" evidence="3">
    <location>
        <begin position="926"/>
        <end position="1330"/>
    </location>
</feature>
<feature type="compositionally biased region" description="Low complexity" evidence="3">
    <location>
        <begin position="9"/>
        <end position="36"/>
    </location>
</feature>
<feature type="compositionally biased region" description="Basic and acidic residues" evidence="3">
    <location>
        <begin position="46"/>
        <end position="94"/>
    </location>
</feature>
<feature type="compositionally biased region" description="Low complexity" evidence="3">
    <location>
        <begin position="99"/>
        <end position="113"/>
    </location>
</feature>
<feature type="compositionally biased region" description="Basic and acidic residues" evidence="3">
    <location>
        <begin position="115"/>
        <end position="135"/>
    </location>
</feature>
<feature type="compositionally biased region" description="Polar residues" evidence="3">
    <location>
        <begin position="138"/>
        <end position="148"/>
    </location>
</feature>
<feature type="compositionally biased region" description="Basic and acidic residues" evidence="3">
    <location>
        <begin position="149"/>
        <end position="166"/>
    </location>
</feature>
<feature type="compositionally biased region" description="Polar residues" evidence="3">
    <location>
        <begin position="168"/>
        <end position="177"/>
    </location>
</feature>
<feature type="compositionally biased region" description="Basic and acidic residues" evidence="3">
    <location>
        <begin position="191"/>
        <end position="201"/>
    </location>
</feature>
<feature type="compositionally biased region" description="Basic and acidic residues" evidence="3">
    <location>
        <begin position="208"/>
        <end position="236"/>
    </location>
</feature>
<feature type="compositionally biased region" description="Basic residues" evidence="3">
    <location>
        <begin position="252"/>
        <end position="277"/>
    </location>
</feature>
<feature type="compositionally biased region" description="Basic and acidic residues" evidence="3">
    <location>
        <begin position="278"/>
        <end position="307"/>
    </location>
</feature>
<feature type="compositionally biased region" description="Basic and acidic residues" evidence="3">
    <location>
        <begin position="316"/>
        <end position="325"/>
    </location>
</feature>
<feature type="compositionally biased region" description="Low complexity" evidence="3">
    <location>
        <begin position="355"/>
        <end position="366"/>
    </location>
</feature>
<feature type="compositionally biased region" description="Low complexity" evidence="3">
    <location>
        <begin position="665"/>
        <end position="678"/>
    </location>
</feature>
<feature type="compositionally biased region" description="Acidic residues" evidence="3">
    <location>
        <begin position="679"/>
        <end position="689"/>
    </location>
</feature>
<feature type="compositionally biased region" description="Low complexity" evidence="3">
    <location>
        <begin position="941"/>
        <end position="951"/>
    </location>
</feature>
<feature type="compositionally biased region" description="Acidic residues" evidence="3">
    <location>
        <begin position="952"/>
        <end position="963"/>
    </location>
</feature>
<feature type="compositionally biased region" description="Low complexity" evidence="3">
    <location>
        <begin position="964"/>
        <end position="976"/>
    </location>
</feature>
<feature type="compositionally biased region" description="Basic residues" evidence="3">
    <location>
        <begin position="980"/>
        <end position="1012"/>
    </location>
</feature>
<feature type="compositionally biased region" description="Basic and acidic residues" evidence="3">
    <location>
        <begin position="1013"/>
        <end position="1033"/>
    </location>
</feature>
<feature type="compositionally biased region" description="Basic residues" evidence="3">
    <location>
        <begin position="1034"/>
        <end position="1054"/>
    </location>
</feature>
<feature type="compositionally biased region" description="Low complexity" evidence="3">
    <location>
        <begin position="1072"/>
        <end position="1082"/>
    </location>
</feature>
<feature type="compositionally biased region" description="Basic and acidic residues" evidence="3">
    <location>
        <begin position="1089"/>
        <end position="1110"/>
    </location>
</feature>
<feature type="compositionally biased region" description="Basic and acidic residues" evidence="3">
    <location>
        <begin position="1133"/>
        <end position="1195"/>
    </location>
</feature>
<feature type="compositionally biased region" description="Basic and acidic residues" evidence="3">
    <location>
        <begin position="1203"/>
        <end position="1320"/>
    </location>
</feature>
<feature type="compositionally biased region" description="Basic residues" evidence="3">
    <location>
        <begin position="1321"/>
        <end position="1330"/>
    </location>
</feature>
<feature type="modified residue" description="Phosphothreonine" evidence="5">
    <location>
        <position position="191"/>
    </location>
</feature>
<feature type="modified residue" description="Phosphothreonine" evidence="5">
    <location>
        <position position="201"/>
    </location>
</feature>
<feature type="modified residue" description="Phosphoserine" evidence="5">
    <location>
        <position position="219"/>
    </location>
</feature>
<feature type="modified residue" description="Phosphoserine" evidence="5">
    <location>
        <position position="221"/>
    </location>
</feature>
<feature type="modified residue" description="Phosphothreonine" evidence="5">
    <location>
        <position position="1108"/>
    </location>
</feature>
<feature type="modified residue" description="Phosphoserine" evidence="5">
    <location>
        <position position="1111"/>
    </location>
</feature>
<feature type="modified residue" description="Phosphoserine" evidence="4">
    <location>
        <position position="1121"/>
    </location>
</feature>
<feature type="modified residue" description="Phosphoserine" evidence="5">
    <location>
        <position position="1180"/>
    </location>
</feature>
<feature type="modified residue" description="Phosphoserine" evidence="5">
    <location>
        <position position="1181"/>
    </location>
</feature>
<feature type="modified residue" description="Phosphotyrosine" evidence="5">
    <location>
        <position position="1182"/>
    </location>
</feature>
<feature type="sequence conflict" description="In Ref. 3; AAL29144." evidence="7" ref="3">
    <original>H</original>
    <variation>R</variation>
    <location>
        <position position="1051"/>
    </location>
</feature>
<feature type="sequence conflict" description="In Ref. 3; AAL29144." evidence="7" ref="3">
    <original>N</original>
    <variation>K</variation>
    <location>
        <position position="1169"/>
    </location>
</feature>
<feature type="sequence conflict" description="In Ref. 3; AAL29144." evidence="7" ref="3">
    <original>R</original>
    <variation>RGERSDRGERSDR</variation>
    <location>
        <position position="1281"/>
    </location>
</feature>
<protein>
    <recommendedName>
        <fullName>Pre-mRNA-splicing factor CWC22 homolog</fullName>
    </recommendedName>
    <alternativeName>
        <fullName>Nucampholin</fullName>
    </alternativeName>
</protein>
<keyword id="KW-0507">mRNA processing</keyword>
<keyword id="KW-0508">mRNA splicing</keyword>
<keyword id="KW-0539">Nucleus</keyword>
<keyword id="KW-0597">Phosphoprotein</keyword>
<keyword id="KW-1185">Reference proteome</keyword>
<evidence type="ECO:0000250" key="1">
    <source>
        <dbReference type="UniProtKB" id="Q9HCG8"/>
    </source>
</evidence>
<evidence type="ECO:0000255" key="2">
    <source>
        <dbReference type="PROSITE-ProRule" id="PRU00698"/>
    </source>
</evidence>
<evidence type="ECO:0000256" key="3">
    <source>
        <dbReference type="SAM" id="MobiDB-lite"/>
    </source>
</evidence>
<evidence type="ECO:0000269" key="4">
    <source>
    </source>
</evidence>
<evidence type="ECO:0000269" key="5">
    <source>
    </source>
</evidence>
<evidence type="ECO:0000269" key="6">
    <source>
    </source>
</evidence>
<evidence type="ECO:0000305" key="7"/>
<sequence length="1330" mass="151637">MGESDAESDSSSNSSSSDTSSGSDSDARSESSSSESSGREEEEAKQEESAKDAKKTDDTDRGEKRAKERDAGQDEQPTEQKKTPAAEPRSERQHISHSAGVEKQQEEAVAAAEAESEKLNEAKKVETPVQRKEEAEASSVTKELNSPKAQEENAARELEERRKDEEQPVTTNGSSKESPVEAAAETVKPPTADHIEEGEITDKDEDDLPTKEEKKAVASKSPPKETQRKQSRSPDGKRRRPRSSSRSPSPSSRRRRRSRSKGSRTRSRSKSPIRRRSNSLERRRVERQRRHEERDKRDEERAKEREKRHQKGEPTSSRRRDDSREKKRSPERKRDRSSSTPKSKSSKTPRHTETTETNADNETVTEPAAKITERQRKTVDVLTSRTGGAYIPPAKLRMMQSQITDKSSAAYQRIAWEALKKSIHGYINKVNVTNIAIITRELLRENIVRGRGLLSRSIIQAQAASPTFTHVYAALVSIINSKFPNIGELLLKRLVIQFRRAFRRNDKMVCMSATRFIGHLVNQRVAHEILALEILTLLVETPTDDSVEVAIAFLKECGMKLTEVSSKGIGAIFEMLRNILHEGKLDKRVQYMIEVLFQIRKDGFKDHQAVVPELELVEEDDQFTHLMMLDEATETEDILNVFKFDDNYAENEDKYKGLSREILGSDDGSSSGSGSGSDSDSDSDGESGSDAEKKAEAGDIIDSTETNLIALRRTIYLTINSSLDYEECAHKLMKMQLKPGQEIELCHMFLDCCAEQRTYEKFYGLLAQRFCNINKIYIPPFEEIFKDTYQTTHRLDTNRLRNVSKFFAHLLFTDAISWDVLECIQLNEDDTTSSSRIFIKILFQELAEYMGLGKLNAKLKDDVLVESIAGLFPKDNPRNTRFSINFFTSIGLGGLTDDLRRFLKNAPKSVPAINAEILANAGGNPFRDGSAPAGNTKVAPSSSSSSSSSSDTDSEDSSEEDSSSDSSSESSSSDSSSEPKKKRKRKDKDKKKSKKATKEKSKKTKNKKKKKKAEKEQEKEKEKQRKSKKEKEKDKKRKKEEKKAAKKKSKHRRKSQESSDSSGSEDSDKSTSESSDSSNSSSDESDAEPQAKIKRQEHVEKNKFRGRTQDSDEFNLEGPGSKNRFQPNGNGQRRRDNSTGRERNRENSSYDRERNRGNSSYDRERKRGNSSYDRERNRESSYDKERKNRNAVAHDRQRKRDRSRSYERPTIRENSAPREKRMESSRSEKDSRRGDRSSRNERSDRGERSDRGERSDRGERSDRGERSDRGERSDRGERSDREKERSRAKERERDRDRDLKGQRERKRERDDGSRDRSRRERSSRRSKGRS</sequence>
<gene>
    <name type="primary">ncm</name>
    <name type="ORF">CG12750</name>
</gene>
<dbReference type="EMBL" id="AE014134">
    <property type="protein sequence ID" value="AAF53667.3"/>
    <property type="molecule type" value="Genomic_DNA"/>
</dbReference>
<dbReference type="EMBL" id="AY061596">
    <property type="protein sequence ID" value="AAL29144.1"/>
    <property type="status" value="ALT_INIT"/>
    <property type="molecule type" value="mRNA"/>
</dbReference>
<dbReference type="EMBL" id="AY089504">
    <property type="protein sequence ID" value="AAL90242.1"/>
    <property type="molecule type" value="mRNA"/>
</dbReference>
<dbReference type="EMBL" id="BT100034">
    <property type="protein sequence ID" value="ACX54942.1"/>
    <property type="molecule type" value="mRNA"/>
</dbReference>
<dbReference type="EMBL" id="BT031132">
    <property type="protein sequence ID" value="ABX00754.1"/>
    <property type="status" value="ALT_FRAME"/>
    <property type="molecule type" value="mRNA"/>
</dbReference>
<dbReference type="RefSeq" id="NP_609877.2">
    <property type="nucleotide sequence ID" value="NM_136033.3"/>
</dbReference>
<dbReference type="SMR" id="Q9VJ87"/>
<dbReference type="BioGRID" id="61094">
    <property type="interactions" value="11"/>
</dbReference>
<dbReference type="FunCoup" id="Q9VJ87">
    <property type="interactions" value="241"/>
</dbReference>
<dbReference type="IntAct" id="Q9VJ87">
    <property type="interactions" value="9"/>
</dbReference>
<dbReference type="STRING" id="7227.FBpp0080638"/>
<dbReference type="iPTMnet" id="Q9VJ87"/>
<dbReference type="PaxDb" id="7227-FBpp0080638"/>
<dbReference type="EnsemblMetazoa" id="FBtr0081088">
    <property type="protein sequence ID" value="FBpp0080638"/>
    <property type="gene ID" value="FBgn0086707"/>
</dbReference>
<dbReference type="GeneID" id="35099"/>
<dbReference type="KEGG" id="dme:Dmel_CG12750"/>
<dbReference type="AGR" id="FB:FBgn0086707"/>
<dbReference type="CTD" id="35099"/>
<dbReference type="FlyBase" id="FBgn0086707">
    <property type="gene designation" value="ncm"/>
</dbReference>
<dbReference type="VEuPathDB" id="VectorBase:FBgn0086707"/>
<dbReference type="eggNOG" id="KOG2140">
    <property type="taxonomic scope" value="Eukaryota"/>
</dbReference>
<dbReference type="GeneTree" id="ENSGT00940000153458"/>
<dbReference type="HOGENOM" id="CLU_006308_1_0_1"/>
<dbReference type="InParanoid" id="Q9VJ87"/>
<dbReference type="OMA" id="PPMGREQ"/>
<dbReference type="OrthoDB" id="1924287at2759"/>
<dbReference type="PhylomeDB" id="Q9VJ87"/>
<dbReference type="Reactome" id="R-DME-72163">
    <property type="pathway name" value="mRNA Splicing - Major Pathway"/>
</dbReference>
<dbReference type="SignaLink" id="Q9VJ87"/>
<dbReference type="BioGRID-ORCS" id="35099">
    <property type="hits" value="1 hit in 1 CRISPR screen"/>
</dbReference>
<dbReference type="ChiTaRS" id="ncm">
    <property type="organism name" value="fly"/>
</dbReference>
<dbReference type="GenomeRNAi" id="35099"/>
<dbReference type="PRO" id="PR:Q9VJ87"/>
<dbReference type="Proteomes" id="UP000000803">
    <property type="component" value="Chromosome 2L"/>
</dbReference>
<dbReference type="Bgee" id="FBgn0086707">
    <property type="expression patterns" value="Expressed in eye photoreceptor cell (Drosophila) in open tracheal system trachea and 201 other cell types or tissues"/>
</dbReference>
<dbReference type="GO" id="GO:0071013">
    <property type="term" value="C:catalytic step 2 spliceosome"/>
    <property type="evidence" value="ECO:0000318"/>
    <property type="project" value="GO_Central"/>
</dbReference>
<dbReference type="GO" id="GO:0016607">
    <property type="term" value="C:nuclear speck"/>
    <property type="evidence" value="ECO:0007669"/>
    <property type="project" value="UniProtKB-SubCell"/>
</dbReference>
<dbReference type="GO" id="GO:0005681">
    <property type="term" value="C:spliceosomal complex"/>
    <property type="evidence" value="ECO:0000250"/>
    <property type="project" value="UniProtKB"/>
</dbReference>
<dbReference type="GO" id="GO:0003723">
    <property type="term" value="F:RNA binding"/>
    <property type="evidence" value="ECO:0000250"/>
    <property type="project" value="UniProtKB"/>
</dbReference>
<dbReference type="GO" id="GO:0000398">
    <property type="term" value="P:mRNA splicing, via spliceosome"/>
    <property type="evidence" value="ECO:0000318"/>
    <property type="project" value="GO_Central"/>
</dbReference>
<dbReference type="FunFam" id="1.25.40.180:FF:000004">
    <property type="entry name" value="pre-mRNA-splicing factor CWC22 homolog"/>
    <property type="match status" value="1"/>
</dbReference>
<dbReference type="Gene3D" id="1.25.40.180">
    <property type="match status" value="1"/>
</dbReference>
<dbReference type="InterPro" id="IPR016024">
    <property type="entry name" value="ARM-type_fold"/>
</dbReference>
<dbReference type="InterPro" id="IPR050781">
    <property type="entry name" value="CWC22_splicing_factor"/>
</dbReference>
<dbReference type="InterPro" id="IPR003891">
    <property type="entry name" value="Initiation_fac_eIF4g_MI"/>
</dbReference>
<dbReference type="InterPro" id="IPR003890">
    <property type="entry name" value="MIF4G-like_typ-3"/>
</dbReference>
<dbReference type="PANTHER" id="PTHR18034">
    <property type="entry name" value="CELL CYCLE CONTROL PROTEIN CWF22-RELATED"/>
    <property type="match status" value="1"/>
</dbReference>
<dbReference type="PANTHER" id="PTHR18034:SF3">
    <property type="entry name" value="PRE-MRNA-SPLICING FACTOR CWC22 HOMOLOG"/>
    <property type="match status" value="1"/>
</dbReference>
<dbReference type="Pfam" id="PF02847">
    <property type="entry name" value="MA3"/>
    <property type="match status" value="1"/>
</dbReference>
<dbReference type="SMART" id="SM00544">
    <property type="entry name" value="MA3"/>
    <property type="match status" value="1"/>
</dbReference>
<dbReference type="SMART" id="SM00543">
    <property type="entry name" value="MIF4G"/>
    <property type="match status" value="1"/>
</dbReference>
<dbReference type="SUPFAM" id="SSF48371">
    <property type="entry name" value="ARM repeat"/>
    <property type="match status" value="1"/>
</dbReference>
<dbReference type="PROSITE" id="PS51366">
    <property type="entry name" value="MI"/>
    <property type="match status" value="1"/>
</dbReference>
<organism>
    <name type="scientific">Drosophila melanogaster</name>
    <name type="common">Fruit fly</name>
    <dbReference type="NCBI Taxonomy" id="7227"/>
    <lineage>
        <taxon>Eukaryota</taxon>
        <taxon>Metazoa</taxon>
        <taxon>Ecdysozoa</taxon>
        <taxon>Arthropoda</taxon>
        <taxon>Hexapoda</taxon>
        <taxon>Insecta</taxon>
        <taxon>Pterygota</taxon>
        <taxon>Neoptera</taxon>
        <taxon>Endopterygota</taxon>
        <taxon>Diptera</taxon>
        <taxon>Brachycera</taxon>
        <taxon>Muscomorpha</taxon>
        <taxon>Ephydroidea</taxon>
        <taxon>Drosophilidae</taxon>
        <taxon>Drosophila</taxon>
        <taxon>Sophophora</taxon>
    </lineage>
</organism>
<name>CWC22_DROME</name>
<proteinExistence type="evidence at protein level"/>
<accession>Q9VJ87</accession>
<accession>A8WHI6</accession>
<accession>C9QPF2</accession>
<accession>Q8SXP2</accession>
<accession>Q95R63</accession>
<comment type="function">
    <text evidence="1">Required for pre-mRNA splicing and for exon-junction complex (EJC) assembly. Hinders eIF4AIII from non-specifically binding RNA and escorts it to the splicing machinery to promote EJC assembly on mature mRNAs.</text>
</comment>
<comment type="subunit">
    <text evidence="1 6">Component of the spliceosome C complex (By similarity). Interacts with eIF4AIII (PubMed:22961380).</text>
</comment>
<comment type="subcellular location">
    <subcellularLocation>
        <location evidence="1">Nucleus speckle</location>
    </subcellularLocation>
</comment>
<comment type="similarity">
    <text evidence="7">Belongs to the CWC22 family.</text>
</comment>
<comment type="sequence caution" evidence="7">
    <conflict type="erroneous initiation">
        <sequence resource="EMBL-CDS" id="AAL29144"/>
    </conflict>
    <text>Truncated N-terminus.</text>
</comment>
<comment type="sequence caution" evidence="7">
    <conflict type="frameshift">
        <sequence resource="EMBL-CDS" id="ABX00754"/>
    </conflict>
</comment>